<sequence length="284" mass="32164">MFEKLSCHTSIKIGGRVKYLVLPNDVFSLERAINVLGDVPFQMMGLGTNLLVQDDDLDIAVVKTERLNQIEIKGEKVLVESGTPLKRLCLFLMEAELGGLEFAYGIPGSVGGAIYMNAGAYGGEIGEFVEAVEVLRDGKRTWLSKNEIFFGYRDSTFKREKSIITRVMMSFKREKKEVIKAKMDDYIKRRLEKQPLDLPSAGSVFKRPREDFYVGKAIESLGLKGYRIGGAQISEKHAGFIVNAGNATFDDVMKLIEFVRKKVKEKYGVELETEVEIWWNGRRW</sequence>
<comment type="function">
    <text evidence="1">Cell wall formation.</text>
</comment>
<comment type="catalytic activity">
    <reaction evidence="1">
        <text>UDP-N-acetyl-alpha-D-muramate + NADP(+) = UDP-N-acetyl-3-O-(1-carboxyvinyl)-alpha-D-glucosamine + NADPH + H(+)</text>
        <dbReference type="Rhea" id="RHEA:12248"/>
        <dbReference type="ChEBI" id="CHEBI:15378"/>
        <dbReference type="ChEBI" id="CHEBI:57783"/>
        <dbReference type="ChEBI" id="CHEBI:58349"/>
        <dbReference type="ChEBI" id="CHEBI:68483"/>
        <dbReference type="ChEBI" id="CHEBI:70757"/>
        <dbReference type="EC" id="1.3.1.98"/>
    </reaction>
</comment>
<comment type="cofactor">
    <cofactor evidence="1">
        <name>FAD</name>
        <dbReference type="ChEBI" id="CHEBI:57692"/>
    </cofactor>
</comment>
<comment type="pathway">
    <text evidence="1">Cell wall biogenesis; peptidoglycan biosynthesis.</text>
</comment>
<comment type="subcellular location">
    <subcellularLocation>
        <location evidence="1">Cytoplasm</location>
    </subcellularLocation>
</comment>
<comment type="similarity">
    <text evidence="1">Belongs to the MurB family.</text>
</comment>
<comment type="sequence caution" evidence="2">
    <conflict type="erroneous initiation">
        <sequence resource="EMBL-CDS" id="ABQ47028"/>
    </conflict>
</comment>
<gene>
    <name evidence="1" type="primary">murB</name>
    <name type="ordered locus">Tpet_1010</name>
</gene>
<feature type="chain" id="PRO_0000332520" description="UDP-N-acetylenolpyruvoylglucosamine reductase">
    <location>
        <begin position="1"/>
        <end position="284"/>
    </location>
</feature>
<feature type="domain" description="FAD-binding PCMH-type" evidence="1">
    <location>
        <begin position="12"/>
        <end position="174"/>
    </location>
</feature>
<feature type="active site" evidence="1">
    <location>
        <position position="153"/>
    </location>
</feature>
<feature type="active site" description="Proton donor" evidence="1">
    <location>
        <position position="203"/>
    </location>
</feature>
<feature type="active site" evidence="1">
    <location>
        <position position="274"/>
    </location>
</feature>
<dbReference type="EC" id="1.3.1.98" evidence="1"/>
<dbReference type="EMBL" id="CP000702">
    <property type="protein sequence ID" value="ABQ47028.1"/>
    <property type="status" value="ALT_INIT"/>
    <property type="molecule type" value="Genomic_DNA"/>
</dbReference>
<dbReference type="RefSeq" id="WP_011943564.1">
    <property type="nucleotide sequence ID" value="NC_009486.1"/>
</dbReference>
<dbReference type="SMR" id="A5ILF5"/>
<dbReference type="STRING" id="390874.Tpet_1010"/>
<dbReference type="KEGG" id="tpt:Tpet_1010"/>
<dbReference type="eggNOG" id="COG0812">
    <property type="taxonomic scope" value="Bacteria"/>
</dbReference>
<dbReference type="HOGENOM" id="CLU_035304_1_1_0"/>
<dbReference type="UniPathway" id="UPA00219"/>
<dbReference type="Proteomes" id="UP000006558">
    <property type="component" value="Chromosome"/>
</dbReference>
<dbReference type="GO" id="GO:0005829">
    <property type="term" value="C:cytosol"/>
    <property type="evidence" value="ECO:0007669"/>
    <property type="project" value="TreeGrafter"/>
</dbReference>
<dbReference type="GO" id="GO:0071949">
    <property type="term" value="F:FAD binding"/>
    <property type="evidence" value="ECO:0007669"/>
    <property type="project" value="InterPro"/>
</dbReference>
<dbReference type="GO" id="GO:0008762">
    <property type="term" value="F:UDP-N-acetylmuramate dehydrogenase activity"/>
    <property type="evidence" value="ECO:0007669"/>
    <property type="project" value="UniProtKB-UniRule"/>
</dbReference>
<dbReference type="GO" id="GO:0051301">
    <property type="term" value="P:cell division"/>
    <property type="evidence" value="ECO:0007669"/>
    <property type="project" value="UniProtKB-KW"/>
</dbReference>
<dbReference type="GO" id="GO:0071555">
    <property type="term" value="P:cell wall organization"/>
    <property type="evidence" value="ECO:0007669"/>
    <property type="project" value="UniProtKB-KW"/>
</dbReference>
<dbReference type="GO" id="GO:0009252">
    <property type="term" value="P:peptidoglycan biosynthetic process"/>
    <property type="evidence" value="ECO:0007669"/>
    <property type="project" value="UniProtKB-UniRule"/>
</dbReference>
<dbReference type="GO" id="GO:0008360">
    <property type="term" value="P:regulation of cell shape"/>
    <property type="evidence" value="ECO:0007669"/>
    <property type="project" value="UniProtKB-KW"/>
</dbReference>
<dbReference type="Gene3D" id="3.30.465.10">
    <property type="match status" value="1"/>
</dbReference>
<dbReference type="Gene3D" id="3.90.78.10">
    <property type="entry name" value="UDP-N-acetylenolpyruvoylglucosamine reductase, C-terminal domain"/>
    <property type="match status" value="1"/>
</dbReference>
<dbReference type="Gene3D" id="3.30.43.10">
    <property type="entry name" value="Uridine Diphospho-n-acetylenolpyruvylglucosamine Reductase, domain 2"/>
    <property type="match status" value="1"/>
</dbReference>
<dbReference type="HAMAP" id="MF_00037">
    <property type="entry name" value="MurB"/>
    <property type="match status" value="1"/>
</dbReference>
<dbReference type="InterPro" id="IPR016166">
    <property type="entry name" value="FAD-bd_PCMH"/>
</dbReference>
<dbReference type="InterPro" id="IPR036318">
    <property type="entry name" value="FAD-bd_PCMH-like_sf"/>
</dbReference>
<dbReference type="InterPro" id="IPR016167">
    <property type="entry name" value="FAD-bd_PCMH_sub1"/>
</dbReference>
<dbReference type="InterPro" id="IPR016169">
    <property type="entry name" value="FAD-bd_PCMH_sub2"/>
</dbReference>
<dbReference type="InterPro" id="IPR003170">
    <property type="entry name" value="MurB"/>
</dbReference>
<dbReference type="InterPro" id="IPR011601">
    <property type="entry name" value="MurB_C"/>
</dbReference>
<dbReference type="InterPro" id="IPR036635">
    <property type="entry name" value="MurB_C_sf"/>
</dbReference>
<dbReference type="InterPro" id="IPR006094">
    <property type="entry name" value="Oxid_FAD_bind_N"/>
</dbReference>
<dbReference type="NCBIfam" id="TIGR00179">
    <property type="entry name" value="murB"/>
    <property type="match status" value="1"/>
</dbReference>
<dbReference type="NCBIfam" id="NF010480">
    <property type="entry name" value="PRK13905.1"/>
    <property type="match status" value="1"/>
</dbReference>
<dbReference type="PANTHER" id="PTHR21071">
    <property type="entry name" value="UDP-N-ACETYLENOLPYRUVOYLGLUCOSAMINE REDUCTASE"/>
    <property type="match status" value="1"/>
</dbReference>
<dbReference type="PANTHER" id="PTHR21071:SF4">
    <property type="entry name" value="UDP-N-ACETYLENOLPYRUVOYLGLUCOSAMINE REDUCTASE"/>
    <property type="match status" value="1"/>
</dbReference>
<dbReference type="Pfam" id="PF01565">
    <property type="entry name" value="FAD_binding_4"/>
    <property type="match status" value="1"/>
</dbReference>
<dbReference type="Pfam" id="PF02873">
    <property type="entry name" value="MurB_C"/>
    <property type="match status" value="1"/>
</dbReference>
<dbReference type="SUPFAM" id="SSF56176">
    <property type="entry name" value="FAD-binding/transporter-associated domain-like"/>
    <property type="match status" value="1"/>
</dbReference>
<dbReference type="SUPFAM" id="SSF56194">
    <property type="entry name" value="Uridine diphospho-N-Acetylenolpyruvylglucosamine reductase, MurB, C-terminal domain"/>
    <property type="match status" value="1"/>
</dbReference>
<dbReference type="PROSITE" id="PS51387">
    <property type="entry name" value="FAD_PCMH"/>
    <property type="match status" value="1"/>
</dbReference>
<evidence type="ECO:0000255" key="1">
    <source>
        <dbReference type="HAMAP-Rule" id="MF_00037"/>
    </source>
</evidence>
<evidence type="ECO:0000305" key="2"/>
<keyword id="KW-0131">Cell cycle</keyword>
<keyword id="KW-0132">Cell division</keyword>
<keyword id="KW-0133">Cell shape</keyword>
<keyword id="KW-0961">Cell wall biogenesis/degradation</keyword>
<keyword id="KW-0963">Cytoplasm</keyword>
<keyword id="KW-0274">FAD</keyword>
<keyword id="KW-0285">Flavoprotein</keyword>
<keyword id="KW-0521">NADP</keyword>
<keyword id="KW-0560">Oxidoreductase</keyword>
<keyword id="KW-0573">Peptidoglycan synthesis</keyword>
<reference key="1">
    <citation type="submission" date="2007-05" db="EMBL/GenBank/DDBJ databases">
        <title>Complete sequence of Thermotoga petrophila RKU-1.</title>
        <authorList>
            <consortium name="US DOE Joint Genome Institute"/>
            <person name="Copeland A."/>
            <person name="Lucas S."/>
            <person name="Lapidus A."/>
            <person name="Barry K."/>
            <person name="Glavina del Rio T."/>
            <person name="Dalin E."/>
            <person name="Tice H."/>
            <person name="Pitluck S."/>
            <person name="Sims D."/>
            <person name="Brettin T."/>
            <person name="Bruce D."/>
            <person name="Detter J.C."/>
            <person name="Han C."/>
            <person name="Tapia R."/>
            <person name="Schmutz J."/>
            <person name="Larimer F."/>
            <person name="Land M."/>
            <person name="Hauser L."/>
            <person name="Kyrpides N."/>
            <person name="Mikhailova N."/>
            <person name="Nelson K."/>
            <person name="Gogarten J.P."/>
            <person name="Noll K."/>
            <person name="Richardson P."/>
        </authorList>
    </citation>
    <scope>NUCLEOTIDE SEQUENCE [LARGE SCALE GENOMIC DNA]</scope>
    <source>
        <strain>ATCC BAA-488 / DSM 13995 / JCM 10881 / RKU-1</strain>
    </source>
</reference>
<proteinExistence type="inferred from homology"/>
<name>MURB_THEP1</name>
<accession>A5ILF5</accession>
<organism>
    <name type="scientific">Thermotoga petrophila (strain ATCC BAA-488 / DSM 13995 / JCM 10881 / RKU-1)</name>
    <dbReference type="NCBI Taxonomy" id="390874"/>
    <lineage>
        <taxon>Bacteria</taxon>
        <taxon>Thermotogati</taxon>
        <taxon>Thermotogota</taxon>
        <taxon>Thermotogae</taxon>
        <taxon>Thermotogales</taxon>
        <taxon>Thermotogaceae</taxon>
        <taxon>Thermotoga</taxon>
    </lineage>
</organism>
<protein>
    <recommendedName>
        <fullName evidence="1">UDP-N-acetylenolpyruvoylglucosamine reductase</fullName>
        <ecNumber evidence="1">1.3.1.98</ecNumber>
    </recommendedName>
    <alternativeName>
        <fullName evidence="1">UDP-N-acetylmuramate dehydrogenase</fullName>
    </alternativeName>
</protein>